<dbReference type="EC" id="2.7.2.3" evidence="1"/>
<dbReference type="EMBL" id="AP008934">
    <property type="protein sequence ID" value="BAE19060.1"/>
    <property type="molecule type" value="Genomic_DNA"/>
</dbReference>
<dbReference type="RefSeq" id="WP_011303588.1">
    <property type="nucleotide sequence ID" value="NZ_MTGA01000039.1"/>
</dbReference>
<dbReference type="SMR" id="Q49W00"/>
<dbReference type="KEGG" id="ssp:SSP1915"/>
<dbReference type="eggNOG" id="COG0126">
    <property type="taxonomic scope" value="Bacteria"/>
</dbReference>
<dbReference type="HOGENOM" id="CLU_025427_0_2_9"/>
<dbReference type="OrthoDB" id="9808460at2"/>
<dbReference type="UniPathway" id="UPA00109">
    <property type="reaction ID" value="UER00185"/>
</dbReference>
<dbReference type="Proteomes" id="UP000006371">
    <property type="component" value="Chromosome"/>
</dbReference>
<dbReference type="GO" id="GO:0005829">
    <property type="term" value="C:cytosol"/>
    <property type="evidence" value="ECO:0007669"/>
    <property type="project" value="TreeGrafter"/>
</dbReference>
<dbReference type="GO" id="GO:0043531">
    <property type="term" value="F:ADP binding"/>
    <property type="evidence" value="ECO:0007669"/>
    <property type="project" value="TreeGrafter"/>
</dbReference>
<dbReference type="GO" id="GO:0005524">
    <property type="term" value="F:ATP binding"/>
    <property type="evidence" value="ECO:0007669"/>
    <property type="project" value="UniProtKB-KW"/>
</dbReference>
<dbReference type="GO" id="GO:0004618">
    <property type="term" value="F:phosphoglycerate kinase activity"/>
    <property type="evidence" value="ECO:0007669"/>
    <property type="project" value="UniProtKB-UniRule"/>
</dbReference>
<dbReference type="GO" id="GO:0006094">
    <property type="term" value="P:gluconeogenesis"/>
    <property type="evidence" value="ECO:0007669"/>
    <property type="project" value="TreeGrafter"/>
</dbReference>
<dbReference type="GO" id="GO:0006096">
    <property type="term" value="P:glycolytic process"/>
    <property type="evidence" value="ECO:0007669"/>
    <property type="project" value="UniProtKB-UniRule"/>
</dbReference>
<dbReference type="CDD" id="cd00318">
    <property type="entry name" value="Phosphoglycerate_kinase"/>
    <property type="match status" value="1"/>
</dbReference>
<dbReference type="FunFam" id="3.40.50.1260:FF:000001">
    <property type="entry name" value="Phosphoglycerate kinase"/>
    <property type="match status" value="1"/>
</dbReference>
<dbReference type="FunFam" id="3.40.50.1260:FF:000008">
    <property type="entry name" value="Phosphoglycerate kinase"/>
    <property type="match status" value="1"/>
</dbReference>
<dbReference type="Gene3D" id="3.40.50.1260">
    <property type="entry name" value="Phosphoglycerate kinase, N-terminal domain"/>
    <property type="match status" value="2"/>
</dbReference>
<dbReference type="HAMAP" id="MF_00145">
    <property type="entry name" value="Phosphoglyc_kinase"/>
    <property type="match status" value="1"/>
</dbReference>
<dbReference type="InterPro" id="IPR001576">
    <property type="entry name" value="Phosphoglycerate_kinase"/>
</dbReference>
<dbReference type="InterPro" id="IPR015911">
    <property type="entry name" value="Phosphoglycerate_kinase_CS"/>
</dbReference>
<dbReference type="InterPro" id="IPR015824">
    <property type="entry name" value="Phosphoglycerate_kinase_N"/>
</dbReference>
<dbReference type="InterPro" id="IPR036043">
    <property type="entry name" value="Phosphoglycerate_kinase_sf"/>
</dbReference>
<dbReference type="PANTHER" id="PTHR11406">
    <property type="entry name" value="PHOSPHOGLYCERATE KINASE"/>
    <property type="match status" value="1"/>
</dbReference>
<dbReference type="PANTHER" id="PTHR11406:SF23">
    <property type="entry name" value="PHOSPHOGLYCERATE KINASE 1, CHLOROPLASTIC-RELATED"/>
    <property type="match status" value="1"/>
</dbReference>
<dbReference type="Pfam" id="PF00162">
    <property type="entry name" value="PGK"/>
    <property type="match status" value="1"/>
</dbReference>
<dbReference type="PIRSF" id="PIRSF000724">
    <property type="entry name" value="Pgk"/>
    <property type="match status" value="1"/>
</dbReference>
<dbReference type="PRINTS" id="PR00477">
    <property type="entry name" value="PHGLYCKINASE"/>
</dbReference>
<dbReference type="SUPFAM" id="SSF53748">
    <property type="entry name" value="Phosphoglycerate kinase"/>
    <property type="match status" value="1"/>
</dbReference>
<dbReference type="PROSITE" id="PS00111">
    <property type="entry name" value="PGLYCERATE_KINASE"/>
    <property type="match status" value="1"/>
</dbReference>
<reference key="1">
    <citation type="journal article" date="2005" name="Proc. Natl. Acad. Sci. U.S.A.">
        <title>Whole genome sequence of Staphylococcus saprophyticus reveals the pathogenesis of uncomplicated urinary tract infection.</title>
        <authorList>
            <person name="Kuroda M."/>
            <person name="Yamashita A."/>
            <person name="Hirakawa H."/>
            <person name="Kumano M."/>
            <person name="Morikawa K."/>
            <person name="Higashide M."/>
            <person name="Maruyama A."/>
            <person name="Inose Y."/>
            <person name="Matoba K."/>
            <person name="Toh H."/>
            <person name="Kuhara S."/>
            <person name="Hattori M."/>
            <person name="Ohta T."/>
        </authorList>
    </citation>
    <scope>NUCLEOTIDE SEQUENCE [LARGE SCALE GENOMIC DNA]</scope>
    <source>
        <strain>ATCC 15305 / DSM 20229 / NCIMB 8711 / NCTC 7292 / S-41</strain>
    </source>
</reference>
<gene>
    <name evidence="1" type="primary">pgk</name>
    <name type="ordered locus">SSP1915</name>
</gene>
<organism>
    <name type="scientific">Staphylococcus saprophyticus subsp. saprophyticus (strain ATCC 15305 / DSM 20229 / NCIMB 8711 / NCTC 7292 / S-41)</name>
    <dbReference type="NCBI Taxonomy" id="342451"/>
    <lineage>
        <taxon>Bacteria</taxon>
        <taxon>Bacillati</taxon>
        <taxon>Bacillota</taxon>
        <taxon>Bacilli</taxon>
        <taxon>Bacillales</taxon>
        <taxon>Staphylococcaceae</taxon>
        <taxon>Staphylococcus</taxon>
    </lineage>
</organism>
<feature type="chain" id="PRO_1000009652" description="Phosphoglycerate kinase">
    <location>
        <begin position="1"/>
        <end position="396"/>
    </location>
</feature>
<feature type="binding site" evidence="1">
    <location>
        <begin position="21"/>
        <end position="23"/>
    </location>
    <ligand>
        <name>substrate</name>
    </ligand>
</feature>
<feature type="binding site" evidence="1">
    <location>
        <position position="36"/>
    </location>
    <ligand>
        <name>substrate</name>
    </ligand>
</feature>
<feature type="binding site" evidence="1">
    <location>
        <begin position="59"/>
        <end position="62"/>
    </location>
    <ligand>
        <name>substrate</name>
    </ligand>
</feature>
<feature type="binding site" evidence="1">
    <location>
        <position position="119"/>
    </location>
    <ligand>
        <name>substrate</name>
    </ligand>
</feature>
<feature type="binding site" evidence="1">
    <location>
        <position position="156"/>
    </location>
    <ligand>
        <name>substrate</name>
    </ligand>
</feature>
<feature type="binding site" evidence="1">
    <location>
        <position position="206"/>
    </location>
    <ligand>
        <name>ATP</name>
        <dbReference type="ChEBI" id="CHEBI:30616"/>
    </ligand>
</feature>
<feature type="binding site" evidence="1">
    <location>
        <position position="325"/>
    </location>
    <ligand>
        <name>ATP</name>
        <dbReference type="ChEBI" id="CHEBI:30616"/>
    </ligand>
</feature>
<feature type="binding site" evidence="1">
    <location>
        <begin position="352"/>
        <end position="355"/>
    </location>
    <ligand>
        <name>ATP</name>
        <dbReference type="ChEBI" id="CHEBI:30616"/>
    </ligand>
</feature>
<evidence type="ECO:0000255" key="1">
    <source>
        <dbReference type="HAMAP-Rule" id="MF_00145"/>
    </source>
</evidence>
<sequence>MAKKIVTDLELKGKTVLVRADFNVPMKDGEITDDNRIVQALPTIKYIIEQGGKVVLFSHLGKVKEESDKAALTLKPVANALTEKLGEEVTFVPETRGETLEQSVKDLNEGDVLLVENTRFEDVDGKKESKNDPELGKYWASLGDVFVNDAFGTAHREHASNVGIASNLETVAGFLMEKEIKYIGGVVENPDKPVVAILGGAKVSDKIGVITNLLKIADKVLIGGGMSYTFFKAQGKEIGLSLLEKDKVDFAKELLDRAGDQIVLPVDCKVAKEFSNDAEITEVSVDDIPADQEAMDIGPKSVELFKEQLQGAHTVVWNGPMGVFELSNFAKGTIGVCEAIAELKDANTIIGGGDSAAAAISLGYGDDFSHISTGGGASLEYLEGKELPGVVAIANK</sequence>
<accession>Q49W00</accession>
<proteinExistence type="inferred from homology"/>
<comment type="catalytic activity">
    <reaction evidence="1">
        <text>(2R)-3-phosphoglycerate + ATP = (2R)-3-phospho-glyceroyl phosphate + ADP</text>
        <dbReference type="Rhea" id="RHEA:14801"/>
        <dbReference type="ChEBI" id="CHEBI:30616"/>
        <dbReference type="ChEBI" id="CHEBI:57604"/>
        <dbReference type="ChEBI" id="CHEBI:58272"/>
        <dbReference type="ChEBI" id="CHEBI:456216"/>
        <dbReference type="EC" id="2.7.2.3"/>
    </reaction>
</comment>
<comment type="pathway">
    <text evidence="1">Carbohydrate degradation; glycolysis; pyruvate from D-glyceraldehyde 3-phosphate: step 2/5.</text>
</comment>
<comment type="subunit">
    <text evidence="1">Monomer.</text>
</comment>
<comment type="subcellular location">
    <subcellularLocation>
        <location evidence="1">Cytoplasm</location>
    </subcellularLocation>
</comment>
<comment type="similarity">
    <text evidence="1">Belongs to the phosphoglycerate kinase family.</text>
</comment>
<protein>
    <recommendedName>
        <fullName evidence="1">Phosphoglycerate kinase</fullName>
        <ecNumber evidence="1">2.7.2.3</ecNumber>
    </recommendedName>
</protein>
<name>PGK_STAS1</name>
<keyword id="KW-0067">ATP-binding</keyword>
<keyword id="KW-0963">Cytoplasm</keyword>
<keyword id="KW-0324">Glycolysis</keyword>
<keyword id="KW-0418">Kinase</keyword>
<keyword id="KW-0547">Nucleotide-binding</keyword>
<keyword id="KW-1185">Reference proteome</keyword>
<keyword id="KW-0808">Transferase</keyword>